<organism>
    <name type="scientific">Aeromonas hydrophila subsp. hydrophila (strain ATCC 7966 / DSM 30187 / BCRC 13018 / CCUG 14551 / JCM 1027 / KCTC 2358 / NCIMB 9240 / NCTC 8049)</name>
    <dbReference type="NCBI Taxonomy" id="380703"/>
    <lineage>
        <taxon>Bacteria</taxon>
        <taxon>Pseudomonadati</taxon>
        <taxon>Pseudomonadota</taxon>
        <taxon>Gammaproteobacteria</taxon>
        <taxon>Aeromonadales</taxon>
        <taxon>Aeromonadaceae</taxon>
        <taxon>Aeromonas</taxon>
    </lineage>
</organism>
<keyword id="KW-0963">Cytoplasm</keyword>
<keyword id="KW-0238">DNA-binding</keyword>
<keyword id="KW-1185">Reference proteome</keyword>
<proteinExistence type="inferred from homology"/>
<feature type="chain" id="PRO_1000003676" description="Nucleoid-associated protein AHA_2212">
    <location>
        <begin position="1"/>
        <end position="109"/>
    </location>
</feature>
<feature type="region of interest" description="Disordered" evidence="2">
    <location>
        <begin position="1"/>
        <end position="23"/>
    </location>
</feature>
<feature type="region of interest" description="Disordered" evidence="2">
    <location>
        <begin position="88"/>
        <end position="109"/>
    </location>
</feature>
<feature type="compositionally biased region" description="Low complexity" evidence="2">
    <location>
        <begin position="11"/>
        <end position="23"/>
    </location>
</feature>
<protein>
    <recommendedName>
        <fullName evidence="1">Nucleoid-associated protein AHA_2212</fullName>
    </recommendedName>
</protein>
<sequence length="109" mass="12033">MFGKGGMGNLMKQAQQMQERMQKMQEQLAQMEVVGEAGAGMVKVTMAGSHSVRRIEIDPSLMEDDKEMLEDLVAAAVNDAVRRVEEQNKSKMGELTGGMQLPPGFKMPF</sequence>
<dbReference type="EMBL" id="CP000462">
    <property type="protein sequence ID" value="ABK38586.1"/>
    <property type="molecule type" value="Genomic_DNA"/>
</dbReference>
<dbReference type="RefSeq" id="WP_011706069.1">
    <property type="nucleotide sequence ID" value="NC_008570.1"/>
</dbReference>
<dbReference type="RefSeq" id="YP_856736.1">
    <property type="nucleotide sequence ID" value="NC_008570.1"/>
</dbReference>
<dbReference type="SMR" id="A0KKD5"/>
<dbReference type="STRING" id="380703.AHA_2212"/>
<dbReference type="EnsemblBacteria" id="ABK38586">
    <property type="protein sequence ID" value="ABK38586"/>
    <property type="gene ID" value="AHA_2212"/>
</dbReference>
<dbReference type="KEGG" id="aha:AHA_2212"/>
<dbReference type="PATRIC" id="fig|380703.7.peg.2213"/>
<dbReference type="eggNOG" id="COG0718">
    <property type="taxonomic scope" value="Bacteria"/>
</dbReference>
<dbReference type="HOGENOM" id="CLU_140930_0_0_6"/>
<dbReference type="OrthoDB" id="9808738at2"/>
<dbReference type="Proteomes" id="UP000000756">
    <property type="component" value="Chromosome"/>
</dbReference>
<dbReference type="GO" id="GO:0043590">
    <property type="term" value="C:bacterial nucleoid"/>
    <property type="evidence" value="ECO:0007669"/>
    <property type="project" value="UniProtKB-UniRule"/>
</dbReference>
<dbReference type="GO" id="GO:0005829">
    <property type="term" value="C:cytosol"/>
    <property type="evidence" value="ECO:0007669"/>
    <property type="project" value="TreeGrafter"/>
</dbReference>
<dbReference type="GO" id="GO:0003677">
    <property type="term" value="F:DNA binding"/>
    <property type="evidence" value="ECO:0007669"/>
    <property type="project" value="UniProtKB-UniRule"/>
</dbReference>
<dbReference type="FunFam" id="3.30.1310.10:FF:000001">
    <property type="entry name" value="Nucleoid-associated protein YbaB"/>
    <property type="match status" value="1"/>
</dbReference>
<dbReference type="Gene3D" id="3.30.1310.10">
    <property type="entry name" value="Nucleoid-associated protein YbaB-like domain"/>
    <property type="match status" value="1"/>
</dbReference>
<dbReference type="HAMAP" id="MF_00274">
    <property type="entry name" value="DNA_YbaB_EbfC"/>
    <property type="match status" value="1"/>
</dbReference>
<dbReference type="InterPro" id="IPR036894">
    <property type="entry name" value="YbaB-like_sf"/>
</dbReference>
<dbReference type="InterPro" id="IPR004401">
    <property type="entry name" value="YbaB/EbfC"/>
</dbReference>
<dbReference type="NCBIfam" id="TIGR00103">
    <property type="entry name" value="DNA_YbaB_EbfC"/>
    <property type="match status" value="1"/>
</dbReference>
<dbReference type="PANTHER" id="PTHR33449">
    <property type="entry name" value="NUCLEOID-ASSOCIATED PROTEIN YBAB"/>
    <property type="match status" value="1"/>
</dbReference>
<dbReference type="PANTHER" id="PTHR33449:SF1">
    <property type="entry name" value="NUCLEOID-ASSOCIATED PROTEIN YBAB"/>
    <property type="match status" value="1"/>
</dbReference>
<dbReference type="Pfam" id="PF02575">
    <property type="entry name" value="YbaB_DNA_bd"/>
    <property type="match status" value="1"/>
</dbReference>
<dbReference type="PIRSF" id="PIRSF004555">
    <property type="entry name" value="UCP004555"/>
    <property type="match status" value="1"/>
</dbReference>
<dbReference type="SUPFAM" id="SSF82607">
    <property type="entry name" value="YbaB-like"/>
    <property type="match status" value="1"/>
</dbReference>
<name>Y2212_AERHH</name>
<accession>A0KKD5</accession>
<comment type="function">
    <text evidence="1">Binds to DNA and alters its conformation. May be involved in regulation of gene expression, nucleoid organization and DNA protection.</text>
</comment>
<comment type="subunit">
    <text evidence="1">Homodimer.</text>
</comment>
<comment type="subcellular location">
    <subcellularLocation>
        <location evidence="1">Cytoplasm</location>
        <location evidence="1">Nucleoid</location>
    </subcellularLocation>
</comment>
<comment type="similarity">
    <text evidence="1">Belongs to the YbaB/EbfC family.</text>
</comment>
<gene>
    <name type="ordered locus">AHA_2212</name>
</gene>
<evidence type="ECO:0000255" key="1">
    <source>
        <dbReference type="HAMAP-Rule" id="MF_00274"/>
    </source>
</evidence>
<evidence type="ECO:0000256" key="2">
    <source>
        <dbReference type="SAM" id="MobiDB-lite"/>
    </source>
</evidence>
<reference key="1">
    <citation type="journal article" date="2006" name="J. Bacteriol.">
        <title>Genome sequence of Aeromonas hydrophila ATCC 7966T: jack of all trades.</title>
        <authorList>
            <person name="Seshadri R."/>
            <person name="Joseph S.W."/>
            <person name="Chopra A.K."/>
            <person name="Sha J."/>
            <person name="Shaw J."/>
            <person name="Graf J."/>
            <person name="Haft D.H."/>
            <person name="Wu M."/>
            <person name="Ren Q."/>
            <person name="Rosovitz M.J."/>
            <person name="Madupu R."/>
            <person name="Tallon L."/>
            <person name="Kim M."/>
            <person name="Jin S."/>
            <person name="Vuong H."/>
            <person name="Stine O.C."/>
            <person name="Ali A."/>
            <person name="Horneman A.J."/>
            <person name="Heidelberg J.F."/>
        </authorList>
    </citation>
    <scope>NUCLEOTIDE SEQUENCE [LARGE SCALE GENOMIC DNA]</scope>
    <source>
        <strain>ATCC 7966 / DSM 30187 / BCRC 13018 / CCUG 14551 / JCM 1027 / KCTC 2358 / NCIMB 9240 / NCTC 8049</strain>
    </source>
</reference>